<name>MET7_YEAST</name>
<evidence type="ECO:0000250" key="1">
    <source>
        <dbReference type="UniProtKB" id="P32929"/>
    </source>
</evidence>
<evidence type="ECO:0000269" key="2">
    <source>
    </source>
</evidence>
<evidence type="ECO:0000269" key="3">
    <source>
    </source>
</evidence>
<evidence type="ECO:0000269" key="4">
    <source>
    </source>
</evidence>
<evidence type="ECO:0000303" key="5">
    <source>
    </source>
</evidence>
<evidence type="ECO:0000305" key="6"/>
<evidence type="ECO:0000305" key="7">
    <source>
    </source>
</evidence>
<feature type="chain" id="PRO_0000114781" description="Cystathionine gamma-synthase">
    <location>
        <begin position="1"/>
        <end position="639"/>
    </location>
</feature>
<feature type="modified residue" description="N6-(pyridoxal phosphate)lysine" evidence="1">
    <location>
        <position position="443"/>
    </location>
</feature>
<gene>
    <name evidence="5" type="primary">STR2</name>
    <name type="ordered locus">YJR130C</name>
    <name type="ORF">J2063</name>
</gene>
<dbReference type="EC" id="2.5.1.48" evidence="7"/>
<dbReference type="EMBL" id="Z49630">
    <property type="protein sequence ID" value="CAA89661.1"/>
    <property type="molecule type" value="Genomic_DNA"/>
</dbReference>
<dbReference type="EMBL" id="AY692979">
    <property type="protein sequence ID" value="AAT92998.1"/>
    <property type="molecule type" value="Genomic_DNA"/>
</dbReference>
<dbReference type="EMBL" id="BK006943">
    <property type="protein sequence ID" value="DAA08914.1"/>
    <property type="molecule type" value="Genomic_DNA"/>
</dbReference>
<dbReference type="PIR" id="S57153">
    <property type="entry name" value="S57153"/>
</dbReference>
<dbReference type="RefSeq" id="NP_012664.1">
    <property type="nucleotide sequence ID" value="NM_001181788.1"/>
</dbReference>
<dbReference type="SMR" id="P47164"/>
<dbReference type="BioGRID" id="33885">
    <property type="interactions" value="110"/>
</dbReference>
<dbReference type="DIP" id="DIP-5049N"/>
<dbReference type="FunCoup" id="P47164">
    <property type="interactions" value="192"/>
</dbReference>
<dbReference type="IntAct" id="P47164">
    <property type="interactions" value="1"/>
</dbReference>
<dbReference type="STRING" id="4932.YJR130C"/>
<dbReference type="GlyGen" id="P47164">
    <property type="glycosylation" value="2 sites, 1 O-linked glycan (2 sites)"/>
</dbReference>
<dbReference type="iPTMnet" id="P47164"/>
<dbReference type="PaxDb" id="4932-YJR130C"/>
<dbReference type="PeptideAtlas" id="P47164"/>
<dbReference type="EnsemblFungi" id="YJR130C_mRNA">
    <property type="protein sequence ID" value="YJR130C"/>
    <property type="gene ID" value="YJR130C"/>
</dbReference>
<dbReference type="GeneID" id="853594"/>
<dbReference type="KEGG" id="sce:YJR130C"/>
<dbReference type="AGR" id="SGD:S000003891"/>
<dbReference type="SGD" id="S000003891">
    <property type="gene designation" value="STR2"/>
</dbReference>
<dbReference type="VEuPathDB" id="FungiDB:YJR130C"/>
<dbReference type="eggNOG" id="KOG0053">
    <property type="taxonomic scope" value="Eukaryota"/>
</dbReference>
<dbReference type="GeneTree" id="ENSGT00940000176383"/>
<dbReference type="HOGENOM" id="CLU_011302_1_0_1"/>
<dbReference type="InParanoid" id="P47164"/>
<dbReference type="OMA" id="KVAKRCR"/>
<dbReference type="OrthoDB" id="10047078at2759"/>
<dbReference type="BioCyc" id="MetaCyc:YJR130C-MONOMER"/>
<dbReference type="BioCyc" id="YEAST:YJR130C-MONOMER"/>
<dbReference type="UniPathway" id="UPA00051">
    <property type="reaction ID" value="UER00077"/>
</dbReference>
<dbReference type="BioGRID-ORCS" id="853594">
    <property type="hits" value="3 hits in 10 CRISPR screens"/>
</dbReference>
<dbReference type="PRO" id="PR:P47164"/>
<dbReference type="Proteomes" id="UP000002311">
    <property type="component" value="Chromosome X"/>
</dbReference>
<dbReference type="RNAct" id="P47164">
    <property type="molecule type" value="protein"/>
</dbReference>
<dbReference type="GO" id="GO:0005737">
    <property type="term" value="C:cytoplasm"/>
    <property type="evidence" value="ECO:0007005"/>
    <property type="project" value="SGD"/>
</dbReference>
<dbReference type="GO" id="GO:0005634">
    <property type="term" value="C:nucleus"/>
    <property type="evidence" value="ECO:0007005"/>
    <property type="project" value="SGD"/>
</dbReference>
<dbReference type="GO" id="GO:0003962">
    <property type="term" value="F:cystathionine gamma-synthase activity"/>
    <property type="evidence" value="ECO:0000315"/>
    <property type="project" value="SGD"/>
</dbReference>
<dbReference type="GO" id="GO:0030170">
    <property type="term" value="F:pyridoxal phosphate binding"/>
    <property type="evidence" value="ECO:0007669"/>
    <property type="project" value="InterPro"/>
</dbReference>
<dbReference type="GO" id="GO:0009086">
    <property type="term" value="P:methionine biosynthetic process"/>
    <property type="evidence" value="ECO:0007669"/>
    <property type="project" value="UniProtKB-KW"/>
</dbReference>
<dbReference type="GO" id="GO:0006790">
    <property type="term" value="P:sulfur compound metabolic process"/>
    <property type="evidence" value="ECO:0000315"/>
    <property type="project" value="SGD"/>
</dbReference>
<dbReference type="GO" id="GO:0019346">
    <property type="term" value="P:transsulfuration"/>
    <property type="evidence" value="ECO:0000315"/>
    <property type="project" value="SGD"/>
</dbReference>
<dbReference type="FunFam" id="3.40.640.10:FF:000094">
    <property type="entry name" value="Probable cystathionine gamma-synthase"/>
    <property type="match status" value="1"/>
</dbReference>
<dbReference type="FunFam" id="3.90.1150.10:FF:000063">
    <property type="entry name" value="Probable cystathionine gamma-synthase"/>
    <property type="match status" value="1"/>
</dbReference>
<dbReference type="Gene3D" id="3.90.1150.10">
    <property type="entry name" value="Aspartate Aminotransferase, domain 1"/>
    <property type="match status" value="1"/>
</dbReference>
<dbReference type="Gene3D" id="3.40.640.10">
    <property type="entry name" value="Type I PLP-dependent aspartate aminotransferase-like (Major domain)"/>
    <property type="match status" value="1"/>
</dbReference>
<dbReference type="InterPro" id="IPR000277">
    <property type="entry name" value="Cys/Met-Metab_PyrdxlP-dep_enz"/>
</dbReference>
<dbReference type="InterPro" id="IPR054542">
    <property type="entry name" value="Cys_met_metab_PP"/>
</dbReference>
<dbReference type="InterPro" id="IPR015424">
    <property type="entry name" value="PyrdxlP-dep_Trfase"/>
</dbReference>
<dbReference type="InterPro" id="IPR015421">
    <property type="entry name" value="PyrdxlP-dep_Trfase_major"/>
</dbReference>
<dbReference type="InterPro" id="IPR015422">
    <property type="entry name" value="PyrdxlP-dep_Trfase_small"/>
</dbReference>
<dbReference type="InterPro" id="IPR051750">
    <property type="entry name" value="Trans-sulfuration_enzymes"/>
</dbReference>
<dbReference type="PANTHER" id="PTHR42699">
    <property type="match status" value="1"/>
</dbReference>
<dbReference type="PANTHER" id="PTHR42699:SF1">
    <property type="entry name" value="CYSTATHIONINE GAMMA-SYNTHASE-RELATED"/>
    <property type="match status" value="1"/>
</dbReference>
<dbReference type="Pfam" id="PF01053">
    <property type="entry name" value="Cys_Met_Meta_PP"/>
    <property type="match status" value="1"/>
</dbReference>
<dbReference type="SUPFAM" id="SSF53383">
    <property type="entry name" value="PLP-dependent transferases"/>
    <property type="match status" value="1"/>
</dbReference>
<dbReference type="PROSITE" id="PS00868">
    <property type="entry name" value="CYS_MET_METAB_PP"/>
    <property type="match status" value="1"/>
</dbReference>
<organism>
    <name type="scientific">Saccharomyces cerevisiae (strain ATCC 204508 / S288c)</name>
    <name type="common">Baker's yeast</name>
    <dbReference type="NCBI Taxonomy" id="559292"/>
    <lineage>
        <taxon>Eukaryota</taxon>
        <taxon>Fungi</taxon>
        <taxon>Dikarya</taxon>
        <taxon>Ascomycota</taxon>
        <taxon>Saccharomycotina</taxon>
        <taxon>Saccharomycetes</taxon>
        <taxon>Saccharomycetales</taxon>
        <taxon>Saccharomycetaceae</taxon>
        <taxon>Saccharomyces</taxon>
    </lineage>
</organism>
<proteinExistence type="evidence at protein level"/>
<comment type="function">
    <text evidence="2">Catalyzes the formation of L-cystathionine from O-succinyl-L-homoserine (OSHS) and L-cysteine, via a gamma-replacement reaction. In the absence of thiol, catalyzes gamma-elimination to form 2-oxobutanoate, succinate and ammonia.</text>
</comment>
<comment type="catalytic activity">
    <reaction evidence="7">
        <text>O-succinyl-L-homoserine + L-cysteine = L,L-cystathionine + succinate + H(+)</text>
        <dbReference type="Rhea" id="RHEA:20397"/>
        <dbReference type="ChEBI" id="CHEBI:15378"/>
        <dbReference type="ChEBI" id="CHEBI:30031"/>
        <dbReference type="ChEBI" id="CHEBI:35235"/>
        <dbReference type="ChEBI" id="CHEBI:57661"/>
        <dbReference type="ChEBI" id="CHEBI:58161"/>
        <dbReference type="EC" id="2.5.1.48"/>
    </reaction>
</comment>
<comment type="cofactor">
    <cofactor evidence="1">
        <name>pyridoxal 5'-phosphate</name>
        <dbReference type="ChEBI" id="CHEBI:597326"/>
    </cofactor>
</comment>
<comment type="pathway">
    <text evidence="7">Amino-acid biosynthesis; L-methionine biosynthesis via de novo pathway; L-cystathionine from O-succinyl-L-homoserine: step 1/1.</text>
</comment>
<comment type="subcellular location">
    <subcellularLocation>
        <location evidence="3">Cytoplasm</location>
    </subcellularLocation>
    <subcellularLocation>
        <location evidence="3">Nucleus</location>
    </subcellularLocation>
</comment>
<comment type="disruption phenotype">
    <text evidence="2">Leads to a clear growth defect on medium containing cysteine or glutathione as sole sulfur source.</text>
</comment>
<comment type="miscellaneous">
    <text evidence="4">Present with 2070 molecules/cell in log phase SD medium.</text>
</comment>
<comment type="similarity">
    <text evidence="6">Belongs to the trans-sulfuration enzymes family. MET7 subfamily.</text>
</comment>
<accession>P47164</accession>
<accession>D6VWU8</accession>
<reference key="1">
    <citation type="journal article" date="1996" name="EMBO J.">
        <title>Complete nucleotide sequence of Saccharomyces cerevisiae chromosome X.</title>
        <authorList>
            <person name="Galibert F."/>
            <person name="Alexandraki D."/>
            <person name="Baur A."/>
            <person name="Boles E."/>
            <person name="Chalwatzis N."/>
            <person name="Chuat J.-C."/>
            <person name="Coster F."/>
            <person name="Cziepluch C."/>
            <person name="de Haan M."/>
            <person name="Domdey H."/>
            <person name="Durand P."/>
            <person name="Entian K.-D."/>
            <person name="Gatius M."/>
            <person name="Goffeau A."/>
            <person name="Grivell L.A."/>
            <person name="Hennemann A."/>
            <person name="Herbert C.J."/>
            <person name="Heumann K."/>
            <person name="Hilger F."/>
            <person name="Hollenberg C.P."/>
            <person name="Huang M.-E."/>
            <person name="Jacq C."/>
            <person name="Jauniaux J.-C."/>
            <person name="Katsoulou C."/>
            <person name="Kirchrath L."/>
            <person name="Kleine K."/>
            <person name="Kordes E."/>
            <person name="Koetter P."/>
            <person name="Liebl S."/>
            <person name="Louis E.J."/>
            <person name="Manus V."/>
            <person name="Mewes H.-W."/>
            <person name="Miosga T."/>
            <person name="Obermaier B."/>
            <person name="Perea J."/>
            <person name="Pohl T.M."/>
            <person name="Portetelle D."/>
            <person name="Pujol A."/>
            <person name="Purnelle B."/>
            <person name="Ramezani Rad M."/>
            <person name="Rasmussen S.W."/>
            <person name="Rose M."/>
            <person name="Rossau R."/>
            <person name="Schaaff-Gerstenschlaeger I."/>
            <person name="Smits P.H.M."/>
            <person name="Scarcez T."/>
            <person name="Soriano N."/>
            <person name="To Van D."/>
            <person name="Tzermia M."/>
            <person name="Van Broekhoven A."/>
            <person name="Vandenbol M."/>
            <person name="Wedler H."/>
            <person name="von Wettstein D."/>
            <person name="Wambutt R."/>
            <person name="Zagulski M."/>
            <person name="Zollner A."/>
            <person name="Karpfinger-Hartl L."/>
        </authorList>
    </citation>
    <scope>NUCLEOTIDE SEQUENCE [LARGE SCALE GENOMIC DNA]</scope>
    <source>
        <strain>ATCC 204508 / S288c</strain>
    </source>
</reference>
<reference key="2">
    <citation type="journal article" date="2014" name="G3 (Bethesda)">
        <title>The reference genome sequence of Saccharomyces cerevisiae: Then and now.</title>
        <authorList>
            <person name="Engel S.R."/>
            <person name="Dietrich F.S."/>
            <person name="Fisk D.G."/>
            <person name="Binkley G."/>
            <person name="Balakrishnan R."/>
            <person name="Costanzo M.C."/>
            <person name="Dwight S.S."/>
            <person name="Hitz B.C."/>
            <person name="Karra K."/>
            <person name="Nash R.S."/>
            <person name="Weng S."/>
            <person name="Wong E.D."/>
            <person name="Lloyd P."/>
            <person name="Skrzypek M.S."/>
            <person name="Miyasato S.R."/>
            <person name="Simison M."/>
            <person name="Cherry J.M."/>
        </authorList>
    </citation>
    <scope>GENOME REANNOTATION</scope>
    <source>
        <strain>ATCC 204508 / S288c</strain>
    </source>
</reference>
<reference key="3">
    <citation type="journal article" date="2007" name="Genome Res.">
        <title>Approaching a complete repository of sequence-verified protein-encoding clones for Saccharomyces cerevisiae.</title>
        <authorList>
            <person name="Hu Y."/>
            <person name="Rolfs A."/>
            <person name="Bhullar B."/>
            <person name="Murthy T.V.S."/>
            <person name="Zhu C."/>
            <person name="Berger M.F."/>
            <person name="Camargo A.A."/>
            <person name="Kelley F."/>
            <person name="McCarron S."/>
            <person name="Jepson D."/>
            <person name="Richardson A."/>
            <person name="Raphael J."/>
            <person name="Moreira D."/>
            <person name="Taycher E."/>
            <person name="Zuo D."/>
            <person name="Mohr S."/>
            <person name="Kane M.F."/>
            <person name="Williamson J."/>
            <person name="Simpson A.J.G."/>
            <person name="Bulyk M.L."/>
            <person name="Harlow E."/>
            <person name="Marsischky G."/>
            <person name="Kolodner R.D."/>
            <person name="LaBaer J."/>
        </authorList>
    </citation>
    <scope>NUCLEOTIDE SEQUENCE [GENOMIC DNA]</scope>
    <source>
        <strain>ATCC 204508 / S288c</strain>
    </source>
</reference>
<reference key="4">
    <citation type="journal article" date="2000" name="Mol. Gen. Genet.">
        <title>Cysteine is essential for transcriptional regulation of the sulfur assimilation genes in Saccharomyces cerevisiae.</title>
        <authorList>
            <person name="Hansen J."/>
            <person name="Johannesen P.F."/>
        </authorList>
    </citation>
    <scope>IDENTIFICATION</scope>
    <scope>FUNCTION</scope>
    <scope>DISRUPTION PHENOTYPE</scope>
</reference>
<reference key="5">
    <citation type="journal article" date="2003" name="Nature">
        <title>Global analysis of protein localization in budding yeast.</title>
        <authorList>
            <person name="Huh W.-K."/>
            <person name="Falvo J.V."/>
            <person name="Gerke L.C."/>
            <person name="Carroll A.S."/>
            <person name="Howson R.W."/>
            <person name="Weissman J.S."/>
            <person name="O'Shea E.K."/>
        </authorList>
    </citation>
    <scope>SUBCELLULAR LOCATION [LARGE SCALE ANALYSIS]</scope>
</reference>
<reference key="6">
    <citation type="journal article" date="2003" name="Nature">
        <title>Global analysis of protein expression in yeast.</title>
        <authorList>
            <person name="Ghaemmaghami S."/>
            <person name="Huh W.-K."/>
            <person name="Bower K."/>
            <person name="Howson R.W."/>
            <person name="Belle A."/>
            <person name="Dephoure N."/>
            <person name="O'Shea E.K."/>
            <person name="Weissman J.S."/>
        </authorList>
    </citation>
    <scope>LEVEL OF PROTEIN EXPRESSION [LARGE SCALE ANALYSIS]</scope>
</reference>
<sequence length="639" mass="72351">MISRTIGESIPPNTKHAVSVCLPTWEATVGYEEGESSIINSLTTGYPRFFIHKSIKKLCEILSAKYSMEDEACLCFPSYKVANRCREFIKVKTGLSTKVRILQLCTPKPMNQEEKLWRRECKITVVFVDQEIFPVMKQYWQHSGEIVSSRMAEYILHELQVKDNLKKMETVDNGKKFMTEDENRVNEEYIETRFGRNLNFLAADKAKYLIRKRIATKVVEKIDSEGLSDLFSFEHYNESNGPFNVGSGEALDDDQLNSDIPAETITSMGESGSNSTFENTATDDLKFHVNPNTDVYLFPSGMASIFTAHRLLLNFDAKRLSRSSSRQDKLIGYGPPFKKTVMFGFPYTDTLSILRKFNHTHFLGQGDSTSMNALKNILHSGEQILAVFIEAPSNPLLKMGDLQELKRLSDLYSFYIVVDETVGGFVNIDVLPYADIVCSSLTKIFSGDSNVIAGSLVLNPRGKIYEFARKFMKTEDGYEDCLWCEDALCLERNSRDFVERTIKVNTNTDILLKRVLLPQVGKLFKKIYYPSLTSEDTKRNYDSVMSTKDGGYGGLFSLTFFNIEEAKKFFNNLELCKGPSLGTNFTLACPYAIIAHYQELDEVAQYGVETNLVRVSVGLENSDVLCNVFQRAIEKALGE</sequence>
<keyword id="KW-0028">Amino-acid biosynthesis</keyword>
<keyword id="KW-0963">Cytoplasm</keyword>
<keyword id="KW-0486">Methionine biosynthesis</keyword>
<keyword id="KW-0539">Nucleus</keyword>
<keyword id="KW-0663">Pyridoxal phosphate</keyword>
<keyword id="KW-1185">Reference proteome</keyword>
<keyword id="KW-0808">Transferase</keyword>
<protein>
    <recommendedName>
        <fullName evidence="5">Cystathionine gamma-synthase</fullName>
        <ecNumber evidence="7">2.5.1.48</ecNumber>
    </recommendedName>
    <alternativeName>
        <fullName evidence="5">O-succinylhomoserine (thiol)-lyase</fullName>
    </alternativeName>
    <alternativeName>
        <fullName evidence="5">Sulfur transfer protein 2</fullName>
    </alternativeName>
</protein>